<accession>Q7Z3B1</accession>
<accession>Q5VT21</accession>
<accession>Q6UY06</accession>
<accession>Q8N440</accession>
<accession>Q8NAQ3</accession>
<sequence length="354" mass="38719">MDMMLLVQGACCSNQWLAAVLLSLCCLLPSCLPAGQSVDFPWAAVDNMMVRKGDTAVLRCYLEDGASKGAWLNRSSIIFAGGDKWSVDPRVSISTLNKRDYSLQIQNVDVTDDGPYTCSVQTQHTPRTMQVHLTVQVPPKIYDISNDMTVNEGTNVTLTCLATGKPEPSISWRHISPSAKPFENGQYLDIYGITRDQAGEYECSAENDVSFPDVRKVKVVVNFAPTIQEIKSGTVTPGRSGLIRCEGAGVPPPAFEWYKGEKKLFNGQQGIIIQNFSTRSILTVTNVTQEHFGNYTCVAANKLGTTNASLPLNPPSTAQYGITGSADVLFSCWYLVLTLSSFTSIFYLKNAILQ</sequence>
<evidence type="ECO:0000250" key="1"/>
<evidence type="ECO:0000250" key="2">
    <source>
        <dbReference type="UniProtKB" id="Q80Z24"/>
    </source>
</evidence>
<evidence type="ECO:0000255" key="3"/>
<evidence type="ECO:0000255" key="4">
    <source>
        <dbReference type="PROSITE-ProRule" id="PRU00114"/>
    </source>
</evidence>
<evidence type="ECO:0000303" key="5">
    <source>
    </source>
</evidence>
<evidence type="ECO:0000305" key="6"/>
<evidence type="ECO:0007829" key="7">
    <source>
        <dbReference type="PDB" id="6DLD"/>
    </source>
</evidence>
<evidence type="ECO:0007829" key="8">
    <source>
        <dbReference type="PDB" id="6U6T"/>
    </source>
</evidence>
<gene>
    <name type="primary">NEGR1</name>
    <name type="synonym">IGLON4</name>
    <name type="ORF">UNQ2433/PRO4993</name>
</gene>
<feature type="signal peptide" evidence="1">
    <location>
        <begin position="1"/>
        <end position="37"/>
    </location>
</feature>
<feature type="chain" id="PRO_0000015037" description="Neuronal growth regulator 1">
    <location>
        <begin position="38"/>
        <end position="324"/>
    </location>
</feature>
<feature type="propeptide" id="PRO_0000015038" description="Removed in mature form" evidence="6">
    <location>
        <begin position="325"/>
        <end position="354"/>
    </location>
</feature>
<feature type="domain" description="Ig-like C2-type 1">
    <location>
        <begin position="38"/>
        <end position="134"/>
    </location>
</feature>
<feature type="domain" description="Ig-like C2-type 2">
    <location>
        <begin position="139"/>
        <end position="221"/>
    </location>
</feature>
<feature type="domain" description="Ig-like C2-type 3">
    <location>
        <begin position="225"/>
        <end position="313"/>
    </location>
</feature>
<feature type="modified residue" description="Phosphotyrosine" evidence="2">
    <location>
        <position position="187"/>
    </location>
</feature>
<feature type="lipid moiety-binding region" description="GPI-anchor amidated glycine" evidence="3">
    <location>
        <position position="324"/>
    </location>
</feature>
<feature type="glycosylation site" description="N-linked (GlcNAc...) asparagine" evidence="3">
    <location>
        <position position="73"/>
    </location>
</feature>
<feature type="glycosylation site" description="N-linked (GlcNAc...) asparagine" evidence="3">
    <location>
        <position position="155"/>
    </location>
</feature>
<feature type="glycosylation site" description="N-linked (GlcNAc...) asparagine" evidence="3">
    <location>
        <position position="275"/>
    </location>
</feature>
<feature type="glycosylation site" description="N-linked (GlcNAc...) asparagine" evidence="3">
    <location>
        <position position="286"/>
    </location>
</feature>
<feature type="glycosylation site" description="N-linked (GlcNAc...) asparagine" evidence="3">
    <location>
        <position position="294"/>
    </location>
</feature>
<feature type="glycosylation site" description="N-linked (GlcNAc...) asparagine" evidence="3">
    <location>
        <position position="307"/>
    </location>
</feature>
<feature type="disulfide bond" evidence="4">
    <location>
        <begin position="60"/>
        <end position="118"/>
    </location>
</feature>
<feature type="disulfide bond" evidence="4">
    <location>
        <begin position="160"/>
        <end position="203"/>
    </location>
</feature>
<feature type="disulfide bond" evidence="4">
    <location>
        <begin position="245"/>
        <end position="297"/>
    </location>
</feature>
<feature type="splice variant" id="VSP_056313" description="In isoform 2." evidence="5">
    <location>
        <begin position="1"/>
        <end position="128"/>
    </location>
</feature>
<feature type="sequence conflict" description="In Ref. 3; BAC03858." evidence="6" ref="3">
    <original>S</original>
    <variation>F</variation>
    <location>
        <position position="169"/>
    </location>
</feature>
<feature type="sequence conflict" description="In Ref. 2." evidence="6" ref="2">
    <original>D</original>
    <variation>A</variation>
    <location>
        <position position="208"/>
    </location>
</feature>
<feature type="strand" evidence="8">
    <location>
        <begin position="47"/>
        <end position="49"/>
    </location>
</feature>
<feature type="strand" evidence="8">
    <location>
        <begin position="56"/>
        <end position="58"/>
    </location>
</feature>
<feature type="strand" evidence="8">
    <location>
        <begin position="64"/>
        <end position="66"/>
    </location>
</feature>
<feature type="strand" evidence="8">
    <location>
        <begin position="69"/>
        <end position="73"/>
    </location>
</feature>
<feature type="strand" evidence="8">
    <location>
        <begin position="76"/>
        <end position="80"/>
    </location>
</feature>
<feature type="strand" evidence="8">
    <location>
        <begin position="91"/>
        <end position="94"/>
    </location>
</feature>
<feature type="strand" evidence="8">
    <location>
        <begin position="102"/>
        <end position="105"/>
    </location>
</feature>
<feature type="helix" evidence="8">
    <location>
        <begin position="110"/>
        <end position="112"/>
    </location>
</feature>
<feature type="strand" evidence="8">
    <location>
        <begin position="114"/>
        <end position="120"/>
    </location>
</feature>
<feature type="strand" evidence="8">
    <location>
        <begin position="123"/>
        <end position="125"/>
    </location>
</feature>
<feature type="strand" evidence="8">
    <location>
        <begin position="131"/>
        <end position="134"/>
    </location>
</feature>
<feature type="strand" evidence="8">
    <location>
        <begin position="137"/>
        <end position="144"/>
    </location>
</feature>
<feature type="strand" evidence="8">
    <location>
        <begin position="148"/>
        <end position="151"/>
    </location>
</feature>
<feature type="strand" evidence="8">
    <location>
        <begin position="156"/>
        <end position="166"/>
    </location>
</feature>
<feature type="strand" evidence="8">
    <location>
        <begin position="169"/>
        <end position="178"/>
    </location>
</feature>
<feature type="strand" evidence="8">
    <location>
        <begin position="184"/>
        <end position="192"/>
    </location>
</feature>
<feature type="helix" evidence="8">
    <location>
        <begin position="195"/>
        <end position="197"/>
    </location>
</feature>
<feature type="strand" evidence="8">
    <location>
        <begin position="199"/>
        <end position="206"/>
    </location>
</feature>
<feature type="strand" evidence="8">
    <location>
        <begin position="208"/>
        <end position="211"/>
    </location>
</feature>
<feature type="strand" evidence="8">
    <location>
        <begin position="213"/>
        <end position="232"/>
    </location>
</feature>
<feature type="strand" evidence="8">
    <location>
        <begin position="241"/>
        <end position="251"/>
    </location>
</feature>
<feature type="strand" evidence="8">
    <location>
        <begin position="254"/>
        <end position="259"/>
    </location>
</feature>
<feature type="strand" evidence="7">
    <location>
        <begin position="267"/>
        <end position="270"/>
    </location>
</feature>
<feature type="strand" evidence="8">
    <location>
        <begin position="271"/>
        <end position="275"/>
    </location>
</feature>
<feature type="strand" evidence="8">
    <location>
        <begin position="277"/>
        <end position="286"/>
    </location>
</feature>
<feature type="helix" evidence="8">
    <location>
        <begin position="289"/>
        <end position="291"/>
    </location>
</feature>
<feature type="strand" evidence="8">
    <location>
        <begin position="293"/>
        <end position="300"/>
    </location>
</feature>
<feature type="strand" evidence="8">
    <location>
        <begin position="305"/>
        <end position="312"/>
    </location>
</feature>
<reference key="1">
    <citation type="journal article" date="2007" name="BMC Genomics">
        <title>The full-ORF clone resource of the German cDNA consortium.</title>
        <authorList>
            <person name="Bechtel S."/>
            <person name="Rosenfelder H."/>
            <person name="Duda A."/>
            <person name="Schmidt C.P."/>
            <person name="Ernst U."/>
            <person name="Wellenreuther R."/>
            <person name="Mehrle A."/>
            <person name="Schuster C."/>
            <person name="Bahr A."/>
            <person name="Bloecker H."/>
            <person name="Heubner D."/>
            <person name="Hoerlein A."/>
            <person name="Michel G."/>
            <person name="Wedler H."/>
            <person name="Koehrer K."/>
            <person name="Ottenwaelder B."/>
            <person name="Poustka A."/>
            <person name="Wiemann S."/>
            <person name="Schupp I."/>
        </authorList>
    </citation>
    <scope>NUCLEOTIDE SEQUENCE [LARGE SCALE MRNA] (ISOFORM 1)</scope>
    <source>
        <tissue>Amygdala</tissue>
    </source>
</reference>
<reference key="2">
    <citation type="journal article" date="2003" name="Genome Res.">
        <title>The secreted protein discovery initiative (SPDI), a large-scale effort to identify novel human secreted and transmembrane proteins: a bioinformatics assessment.</title>
        <authorList>
            <person name="Clark H.F."/>
            <person name="Gurney A.L."/>
            <person name="Abaya E."/>
            <person name="Baker K."/>
            <person name="Baldwin D.T."/>
            <person name="Brush J."/>
            <person name="Chen J."/>
            <person name="Chow B."/>
            <person name="Chui C."/>
            <person name="Crowley C."/>
            <person name="Currell B."/>
            <person name="Deuel B."/>
            <person name="Dowd P."/>
            <person name="Eaton D."/>
            <person name="Foster J.S."/>
            <person name="Grimaldi C."/>
            <person name="Gu Q."/>
            <person name="Hass P.E."/>
            <person name="Heldens S."/>
            <person name="Huang A."/>
            <person name="Kim H.S."/>
            <person name="Klimowski L."/>
            <person name="Jin Y."/>
            <person name="Johnson S."/>
            <person name="Lee J."/>
            <person name="Lewis L."/>
            <person name="Liao D."/>
            <person name="Mark M.R."/>
            <person name="Robbie E."/>
            <person name="Sanchez C."/>
            <person name="Schoenfeld J."/>
            <person name="Seshagiri S."/>
            <person name="Simmons L."/>
            <person name="Singh J."/>
            <person name="Smith V."/>
            <person name="Stinson J."/>
            <person name="Vagts A."/>
            <person name="Vandlen R.L."/>
            <person name="Watanabe C."/>
            <person name="Wieand D."/>
            <person name="Woods K."/>
            <person name="Xie M.-H."/>
            <person name="Yansura D.G."/>
            <person name="Yi S."/>
            <person name="Yu G."/>
            <person name="Yuan J."/>
            <person name="Zhang M."/>
            <person name="Zhang Z."/>
            <person name="Goddard A.D."/>
            <person name="Wood W.I."/>
            <person name="Godowski P.J."/>
            <person name="Gray A.M."/>
        </authorList>
    </citation>
    <scope>NUCLEOTIDE SEQUENCE [LARGE SCALE MRNA] (ISOFORM 1)</scope>
</reference>
<reference key="3">
    <citation type="journal article" date="2004" name="Nat. Genet.">
        <title>Complete sequencing and characterization of 21,243 full-length human cDNAs.</title>
        <authorList>
            <person name="Ota T."/>
            <person name="Suzuki Y."/>
            <person name="Nishikawa T."/>
            <person name="Otsuki T."/>
            <person name="Sugiyama T."/>
            <person name="Irie R."/>
            <person name="Wakamatsu A."/>
            <person name="Hayashi K."/>
            <person name="Sato H."/>
            <person name="Nagai K."/>
            <person name="Kimura K."/>
            <person name="Makita H."/>
            <person name="Sekine M."/>
            <person name="Obayashi M."/>
            <person name="Nishi T."/>
            <person name="Shibahara T."/>
            <person name="Tanaka T."/>
            <person name="Ishii S."/>
            <person name="Yamamoto J."/>
            <person name="Saito K."/>
            <person name="Kawai Y."/>
            <person name="Isono Y."/>
            <person name="Nakamura Y."/>
            <person name="Nagahari K."/>
            <person name="Murakami K."/>
            <person name="Yasuda T."/>
            <person name="Iwayanagi T."/>
            <person name="Wagatsuma M."/>
            <person name="Shiratori A."/>
            <person name="Sudo H."/>
            <person name="Hosoiri T."/>
            <person name="Kaku Y."/>
            <person name="Kodaira H."/>
            <person name="Kondo H."/>
            <person name="Sugawara M."/>
            <person name="Takahashi M."/>
            <person name="Kanda K."/>
            <person name="Yokoi T."/>
            <person name="Furuya T."/>
            <person name="Kikkawa E."/>
            <person name="Omura Y."/>
            <person name="Abe K."/>
            <person name="Kamihara K."/>
            <person name="Katsuta N."/>
            <person name="Sato K."/>
            <person name="Tanikawa M."/>
            <person name="Yamazaki M."/>
            <person name="Ninomiya K."/>
            <person name="Ishibashi T."/>
            <person name="Yamashita H."/>
            <person name="Murakawa K."/>
            <person name="Fujimori K."/>
            <person name="Tanai H."/>
            <person name="Kimata M."/>
            <person name="Watanabe M."/>
            <person name="Hiraoka S."/>
            <person name="Chiba Y."/>
            <person name="Ishida S."/>
            <person name="Ono Y."/>
            <person name="Takiguchi S."/>
            <person name="Watanabe S."/>
            <person name="Yosida M."/>
            <person name="Hotuta T."/>
            <person name="Kusano J."/>
            <person name="Kanehori K."/>
            <person name="Takahashi-Fujii A."/>
            <person name="Hara H."/>
            <person name="Tanase T.-O."/>
            <person name="Nomura Y."/>
            <person name="Togiya S."/>
            <person name="Komai F."/>
            <person name="Hara R."/>
            <person name="Takeuchi K."/>
            <person name="Arita M."/>
            <person name="Imose N."/>
            <person name="Musashino K."/>
            <person name="Yuuki H."/>
            <person name="Oshima A."/>
            <person name="Sasaki N."/>
            <person name="Aotsuka S."/>
            <person name="Yoshikawa Y."/>
            <person name="Matsunawa H."/>
            <person name="Ichihara T."/>
            <person name="Shiohata N."/>
            <person name="Sano S."/>
            <person name="Moriya S."/>
            <person name="Momiyama H."/>
            <person name="Satoh N."/>
            <person name="Takami S."/>
            <person name="Terashima Y."/>
            <person name="Suzuki O."/>
            <person name="Nakagawa S."/>
            <person name="Senoh A."/>
            <person name="Mizoguchi H."/>
            <person name="Goto Y."/>
            <person name="Shimizu F."/>
            <person name="Wakebe H."/>
            <person name="Hishigaki H."/>
            <person name="Watanabe T."/>
            <person name="Sugiyama A."/>
            <person name="Takemoto M."/>
            <person name="Kawakami B."/>
            <person name="Yamazaki M."/>
            <person name="Watanabe K."/>
            <person name="Kumagai A."/>
            <person name="Itakura S."/>
            <person name="Fukuzumi Y."/>
            <person name="Fujimori Y."/>
            <person name="Komiyama M."/>
            <person name="Tashiro H."/>
            <person name="Tanigami A."/>
            <person name="Fujiwara T."/>
            <person name="Ono T."/>
            <person name="Yamada K."/>
            <person name="Fujii Y."/>
            <person name="Ozaki K."/>
            <person name="Hirao M."/>
            <person name="Ohmori Y."/>
            <person name="Kawabata A."/>
            <person name="Hikiji T."/>
            <person name="Kobatake N."/>
            <person name="Inagaki H."/>
            <person name="Ikema Y."/>
            <person name="Okamoto S."/>
            <person name="Okitani R."/>
            <person name="Kawakami T."/>
            <person name="Noguchi S."/>
            <person name="Itoh T."/>
            <person name="Shigeta K."/>
            <person name="Senba T."/>
            <person name="Matsumura K."/>
            <person name="Nakajima Y."/>
            <person name="Mizuno T."/>
            <person name="Morinaga M."/>
            <person name="Sasaki M."/>
            <person name="Togashi T."/>
            <person name="Oyama M."/>
            <person name="Hata H."/>
            <person name="Watanabe M."/>
            <person name="Komatsu T."/>
            <person name="Mizushima-Sugano J."/>
            <person name="Satoh T."/>
            <person name="Shirai Y."/>
            <person name="Takahashi Y."/>
            <person name="Nakagawa K."/>
            <person name="Okumura K."/>
            <person name="Nagase T."/>
            <person name="Nomura N."/>
            <person name="Kikuchi H."/>
            <person name="Masuho Y."/>
            <person name="Yamashita R."/>
            <person name="Nakai K."/>
            <person name="Yada T."/>
            <person name="Nakamura Y."/>
            <person name="Ohara O."/>
            <person name="Isogai T."/>
            <person name="Sugano S."/>
        </authorList>
    </citation>
    <scope>NUCLEOTIDE SEQUENCE [LARGE SCALE MRNA] (ISOFORM 1)</scope>
    <source>
        <tissue>Brain</tissue>
    </source>
</reference>
<reference key="4">
    <citation type="journal article" date="2006" name="Nature">
        <title>The DNA sequence and biological annotation of human chromosome 1.</title>
        <authorList>
            <person name="Gregory S.G."/>
            <person name="Barlow K.F."/>
            <person name="McLay K.E."/>
            <person name="Kaul R."/>
            <person name="Swarbreck D."/>
            <person name="Dunham A."/>
            <person name="Scott C.E."/>
            <person name="Howe K.L."/>
            <person name="Woodfine K."/>
            <person name="Spencer C.C.A."/>
            <person name="Jones M.C."/>
            <person name="Gillson C."/>
            <person name="Searle S."/>
            <person name="Zhou Y."/>
            <person name="Kokocinski F."/>
            <person name="McDonald L."/>
            <person name="Evans R."/>
            <person name="Phillips K."/>
            <person name="Atkinson A."/>
            <person name="Cooper R."/>
            <person name="Jones C."/>
            <person name="Hall R.E."/>
            <person name="Andrews T.D."/>
            <person name="Lloyd C."/>
            <person name="Ainscough R."/>
            <person name="Almeida J.P."/>
            <person name="Ambrose K.D."/>
            <person name="Anderson F."/>
            <person name="Andrew R.W."/>
            <person name="Ashwell R.I.S."/>
            <person name="Aubin K."/>
            <person name="Babbage A.K."/>
            <person name="Bagguley C.L."/>
            <person name="Bailey J."/>
            <person name="Beasley H."/>
            <person name="Bethel G."/>
            <person name="Bird C.P."/>
            <person name="Bray-Allen S."/>
            <person name="Brown J.Y."/>
            <person name="Brown A.J."/>
            <person name="Buckley D."/>
            <person name="Burton J."/>
            <person name="Bye J."/>
            <person name="Carder C."/>
            <person name="Chapman J.C."/>
            <person name="Clark S.Y."/>
            <person name="Clarke G."/>
            <person name="Clee C."/>
            <person name="Cobley V."/>
            <person name="Collier R.E."/>
            <person name="Corby N."/>
            <person name="Coville G.J."/>
            <person name="Davies J."/>
            <person name="Deadman R."/>
            <person name="Dunn M."/>
            <person name="Earthrowl M."/>
            <person name="Ellington A.G."/>
            <person name="Errington H."/>
            <person name="Frankish A."/>
            <person name="Frankland J."/>
            <person name="French L."/>
            <person name="Garner P."/>
            <person name="Garnett J."/>
            <person name="Gay L."/>
            <person name="Ghori M.R.J."/>
            <person name="Gibson R."/>
            <person name="Gilby L.M."/>
            <person name="Gillett W."/>
            <person name="Glithero R.J."/>
            <person name="Grafham D.V."/>
            <person name="Griffiths C."/>
            <person name="Griffiths-Jones S."/>
            <person name="Grocock R."/>
            <person name="Hammond S."/>
            <person name="Harrison E.S.I."/>
            <person name="Hart E."/>
            <person name="Haugen E."/>
            <person name="Heath P.D."/>
            <person name="Holmes S."/>
            <person name="Holt K."/>
            <person name="Howden P.J."/>
            <person name="Hunt A.R."/>
            <person name="Hunt S.E."/>
            <person name="Hunter G."/>
            <person name="Isherwood J."/>
            <person name="James R."/>
            <person name="Johnson C."/>
            <person name="Johnson D."/>
            <person name="Joy A."/>
            <person name="Kay M."/>
            <person name="Kershaw J.K."/>
            <person name="Kibukawa M."/>
            <person name="Kimberley A.M."/>
            <person name="King A."/>
            <person name="Knights A.J."/>
            <person name="Lad H."/>
            <person name="Laird G."/>
            <person name="Lawlor S."/>
            <person name="Leongamornlert D.A."/>
            <person name="Lloyd D.M."/>
            <person name="Loveland J."/>
            <person name="Lovell J."/>
            <person name="Lush M.J."/>
            <person name="Lyne R."/>
            <person name="Martin S."/>
            <person name="Mashreghi-Mohammadi M."/>
            <person name="Matthews L."/>
            <person name="Matthews N.S.W."/>
            <person name="McLaren S."/>
            <person name="Milne S."/>
            <person name="Mistry S."/>
            <person name="Moore M.J.F."/>
            <person name="Nickerson T."/>
            <person name="O'Dell C.N."/>
            <person name="Oliver K."/>
            <person name="Palmeiri A."/>
            <person name="Palmer S.A."/>
            <person name="Parker A."/>
            <person name="Patel D."/>
            <person name="Pearce A.V."/>
            <person name="Peck A.I."/>
            <person name="Pelan S."/>
            <person name="Phelps K."/>
            <person name="Phillimore B.J."/>
            <person name="Plumb R."/>
            <person name="Rajan J."/>
            <person name="Raymond C."/>
            <person name="Rouse G."/>
            <person name="Saenphimmachak C."/>
            <person name="Sehra H.K."/>
            <person name="Sheridan E."/>
            <person name="Shownkeen R."/>
            <person name="Sims S."/>
            <person name="Skuce C.D."/>
            <person name="Smith M."/>
            <person name="Steward C."/>
            <person name="Subramanian S."/>
            <person name="Sycamore N."/>
            <person name="Tracey A."/>
            <person name="Tromans A."/>
            <person name="Van Helmond Z."/>
            <person name="Wall M."/>
            <person name="Wallis J.M."/>
            <person name="White S."/>
            <person name="Whitehead S.L."/>
            <person name="Wilkinson J.E."/>
            <person name="Willey D.L."/>
            <person name="Williams H."/>
            <person name="Wilming L."/>
            <person name="Wray P.W."/>
            <person name="Wu Z."/>
            <person name="Coulson A."/>
            <person name="Vaudin M."/>
            <person name="Sulston J.E."/>
            <person name="Durbin R.M."/>
            <person name="Hubbard T."/>
            <person name="Wooster R."/>
            <person name="Dunham I."/>
            <person name="Carter N.P."/>
            <person name="McVean G."/>
            <person name="Ross M.T."/>
            <person name="Harrow J."/>
            <person name="Olson M.V."/>
            <person name="Beck S."/>
            <person name="Rogers J."/>
            <person name="Bentley D.R."/>
        </authorList>
    </citation>
    <scope>NUCLEOTIDE SEQUENCE [LARGE SCALE GENOMIC DNA]</scope>
</reference>
<reference key="5">
    <citation type="journal article" date="2004" name="Genome Res.">
        <title>The status, quality, and expansion of the NIH full-length cDNA project: the Mammalian Gene Collection (MGC).</title>
        <authorList>
            <consortium name="The MGC Project Team"/>
        </authorList>
    </citation>
    <scope>NUCLEOTIDE SEQUENCE [LARGE SCALE MRNA] (ISOFORM 2)</scope>
    <source>
        <tissue>Testis</tissue>
    </source>
</reference>
<reference key="6">
    <citation type="journal article" date="2007" name="Proteomics">
        <title>Computational approach for identification and characterization of GPI-anchored peptides in proteomics experiments.</title>
        <authorList>
            <person name="Omaetxebarria M.J."/>
            <person name="Elortza F."/>
            <person name="Rodriguez-Suarez E."/>
            <person name="Aloria K."/>
            <person name="Arizmendi J.M."/>
            <person name="Jensen O.N."/>
            <person name="Matthiesen R."/>
        </authorList>
    </citation>
    <scope>IDENTIFICATION BY MASS SPECTROMETRY</scope>
</reference>
<keyword id="KW-0002">3D-structure</keyword>
<keyword id="KW-0025">Alternative splicing</keyword>
<keyword id="KW-0130">Cell adhesion</keyword>
<keyword id="KW-1003">Cell membrane</keyword>
<keyword id="KW-1015">Disulfide bond</keyword>
<keyword id="KW-0325">Glycoprotein</keyword>
<keyword id="KW-0336">GPI-anchor</keyword>
<keyword id="KW-0393">Immunoglobulin domain</keyword>
<keyword id="KW-0449">Lipoprotein</keyword>
<keyword id="KW-0472">Membrane</keyword>
<keyword id="KW-0597">Phosphoprotein</keyword>
<keyword id="KW-1267">Proteomics identification</keyword>
<keyword id="KW-1185">Reference proteome</keyword>
<keyword id="KW-0677">Repeat</keyword>
<keyword id="KW-0732">Signal</keyword>
<organism>
    <name type="scientific">Homo sapiens</name>
    <name type="common">Human</name>
    <dbReference type="NCBI Taxonomy" id="9606"/>
    <lineage>
        <taxon>Eukaryota</taxon>
        <taxon>Metazoa</taxon>
        <taxon>Chordata</taxon>
        <taxon>Craniata</taxon>
        <taxon>Vertebrata</taxon>
        <taxon>Euteleostomi</taxon>
        <taxon>Mammalia</taxon>
        <taxon>Eutheria</taxon>
        <taxon>Euarchontoglires</taxon>
        <taxon>Primates</taxon>
        <taxon>Haplorrhini</taxon>
        <taxon>Catarrhini</taxon>
        <taxon>Hominidae</taxon>
        <taxon>Homo</taxon>
    </lineage>
</organism>
<proteinExistence type="evidence at protein level"/>
<dbReference type="EMBL" id="BX538014">
    <property type="protein sequence ID" value="CAD97961.1"/>
    <property type="molecule type" value="mRNA"/>
</dbReference>
<dbReference type="EMBL" id="AY358132">
    <property type="protein sequence ID" value="AAQ88499.1"/>
    <property type="status" value="ALT_INIT"/>
    <property type="molecule type" value="mRNA"/>
</dbReference>
<dbReference type="EMBL" id="AK092307">
    <property type="protein sequence ID" value="BAC03858.1"/>
    <property type="molecule type" value="mRNA"/>
</dbReference>
<dbReference type="EMBL" id="AL359821">
    <property type="status" value="NOT_ANNOTATED_CDS"/>
    <property type="molecule type" value="Genomic_DNA"/>
</dbReference>
<dbReference type="EMBL" id="AL627317">
    <property type="status" value="NOT_ANNOTATED_CDS"/>
    <property type="molecule type" value="Genomic_DNA"/>
</dbReference>
<dbReference type="EMBL" id="AL354949">
    <property type="status" value="NOT_ANNOTATED_CDS"/>
    <property type="molecule type" value="Genomic_DNA"/>
</dbReference>
<dbReference type="EMBL" id="AL645724">
    <property type="status" value="NOT_ANNOTATED_CDS"/>
    <property type="molecule type" value="Genomic_DNA"/>
</dbReference>
<dbReference type="EMBL" id="AL356600">
    <property type="status" value="NOT_ANNOTATED_CDS"/>
    <property type="molecule type" value="Genomic_DNA"/>
</dbReference>
<dbReference type="EMBL" id="AL355590">
    <property type="status" value="NOT_ANNOTATED_CDS"/>
    <property type="molecule type" value="Genomic_DNA"/>
</dbReference>
<dbReference type="EMBL" id="AL365362">
    <property type="status" value="NOT_ANNOTATED_CDS"/>
    <property type="molecule type" value="Genomic_DNA"/>
</dbReference>
<dbReference type="EMBL" id="AL391239">
    <property type="status" value="NOT_ANNOTATED_CDS"/>
    <property type="molecule type" value="Genomic_DNA"/>
</dbReference>
<dbReference type="EMBL" id="AL513349">
    <property type="status" value="NOT_ANNOTATED_CDS"/>
    <property type="molecule type" value="Genomic_DNA"/>
</dbReference>
<dbReference type="EMBL" id="AL645767">
    <property type="status" value="NOT_ANNOTATED_CDS"/>
    <property type="molecule type" value="Genomic_DNA"/>
</dbReference>
<dbReference type="EMBL" id="BC036771">
    <property type="protein sequence ID" value="AAH36771.1"/>
    <property type="molecule type" value="mRNA"/>
</dbReference>
<dbReference type="CCDS" id="CCDS661.1">
    <molecule id="Q7Z3B1-1"/>
</dbReference>
<dbReference type="RefSeq" id="NP_776169.2">
    <molecule id="Q7Z3B1-1"/>
    <property type="nucleotide sequence ID" value="NM_173808.3"/>
</dbReference>
<dbReference type="PDB" id="6DLD">
    <property type="method" value="X-ray"/>
    <property type="resolution" value="3.30 A"/>
    <property type="chains" value="B/D=38-324"/>
</dbReference>
<dbReference type="PDB" id="6U6T">
    <property type="method" value="X-ray"/>
    <property type="resolution" value="3.01 A"/>
    <property type="chains" value="A/B=38-313"/>
</dbReference>
<dbReference type="PDBsum" id="6DLD"/>
<dbReference type="PDBsum" id="6U6T"/>
<dbReference type="SMR" id="Q7Z3B1"/>
<dbReference type="BioGRID" id="129205">
    <property type="interactions" value="14"/>
</dbReference>
<dbReference type="FunCoup" id="Q7Z3B1">
    <property type="interactions" value="676"/>
</dbReference>
<dbReference type="IntAct" id="Q7Z3B1">
    <property type="interactions" value="7"/>
</dbReference>
<dbReference type="STRING" id="9606.ENSP00000350364"/>
<dbReference type="GlyCosmos" id="Q7Z3B1">
    <property type="glycosylation" value="6 sites, No reported glycans"/>
</dbReference>
<dbReference type="GlyGen" id="Q7Z3B1">
    <property type="glycosylation" value="7 sites, 12 N-linked glycans (4 sites)"/>
</dbReference>
<dbReference type="iPTMnet" id="Q7Z3B1"/>
<dbReference type="PhosphoSitePlus" id="Q7Z3B1"/>
<dbReference type="BioMuta" id="NEGR1"/>
<dbReference type="DMDM" id="88984537"/>
<dbReference type="jPOST" id="Q7Z3B1"/>
<dbReference type="MassIVE" id="Q7Z3B1"/>
<dbReference type="PaxDb" id="9606-ENSP00000350364"/>
<dbReference type="PeptideAtlas" id="Q7Z3B1"/>
<dbReference type="ProteomicsDB" id="69021">
    <molecule id="Q7Z3B1-1"/>
</dbReference>
<dbReference type="ProteomicsDB" id="71878"/>
<dbReference type="Pumba" id="Q7Z3B1"/>
<dbReference type="Antibodypedia" id="2206">
    <property type="antibodies" value="196 antibodies from 30 providers"/>
</dbReference>
<dbReference type="DNASU" id="257194"/>
<dbReference type="Ensembl" id="ENST00000306821.3">
    <molecule id="Q7Z3B1-2"/>
    <property type="protein sequence ID" value="ENSP00000305938.3"/>
    <property type="gene ID" value="ENSG00000172260.15"/>
</dbReference>
<dbReference type="Ensembl" id="ENST00000357731.10">
    <molecule id="Q7Z3B1-1"/>
    <property type="protein sequence ID" value="ENSP00000350364.4"/>
    <property type="gene ID" value="ENSG00000172260.15"/>
</dbReference>
<dbReference type="GeneID" id="257194"/>
<dbReference type="KEGG" id="hsa:257194"/>
<dbReference type="MANE-Select" id="ENST00000357731.10">
    <property type="protein sequence ID" value="ENSP00000350364.4"/>
    <property type="RefSeq nucleotide sequence ID" value="NM_173808.3"/>
    <property type="RefSeq protein sequence ID" value="NP_776169.2"/>
</dbReference>
<dbReference type="UCSC" id="uc001dfv.4">
    <molecule id="Q7Z3B1-1"/>
    <property type="organism name" value="human"/>
</dbReference>
<dbReference type="AGR" id="HGNC:17302"/>
<dbReference type="CTD" id="257194"/>
<dbReference type="DisGeNET" id="257194"/>
<dbReference type="GeneCards" id="NEGR1"/>
<dbReference type="HGNC" id="HGNC:17302">
    <property type="gene designation" value="NEGR1"/>
</dbReference>
<dbReference type="HPA" id="ENSG00000172260">
    <property type="expression patterns" value="Tissue enhanced (brain)"/>
</dbReference>
<dbReference type="MIM" id="613173">
    <property type="type" value="gene"/>
</dbReference>
<dbReference type="neXtProt" id="NX_Q7Z3B1"/>
<dbReference type="OpenTargets" id="ENSG00000172260"/>
<dbReference type="PharmGKB" id="PA134862452"/>
<dbReference type="VEuPathDB" id="HostDB:ENSG00000172260"/>
<dbReference type="eggNOG" id="KOG3510">
    <property type="taxonomic scope" value="Eukaryota"/>
</dbReference>
<dbReference type="GeneTree" id="ENSGT00940000159289"/>
<dbReference type="HOGENOM" id="CLU_027228_2_3_1"/>
<dbReference type="InParanoid" id="Q7Z3B1"/>
<dbReference type="OMA" id="CLAISME"/>
<dbReference type="OrthoDB" id="6159398at2759"/>
<dbReference type="PAN-GO" id="Q7Z3B1">
    <property type="GO annotations" value="0 GO annotations based on evolutionary models"/>
</dbReference>
<dbReference type="PhylomeDB" id="Q7Z3B1"/>
<dbReference type="TreeFam" id="TF351104"/>
<dbReference type="PathwayCommons" id="Q7Z3B1"/>
<dbReference type="Reactome" id="R-HSA-163125">
    <property type="pathway name" value="Post-translational modification: synthesis of GPI-anchored proteins"/>
</dbReference>
<dbReference type="SignaLink" id="Q7Z3B1"/>
<dbReference type="BioGRID-ORCS" id="257194">
    <property type="hits" value="13 hits in 1143 CRISPR screens"/>
</dbReference>
<dbReference type="CD-CODE" id="FB4E32DD">
    <property type="entry name" value="Presynaptic clusters and postsynaptic densities"/>
</dbReference>
<dbReference type="ChiTaRS" id="NEGR1">
    <property type="organism name" value="human"/>
</dbReference>
<dbReference type="GeneWiki" id="NEGR1"/>
<dbReference type="GenomeRNAi" id="257194"/>
<dbReference type="Pharos" id="Q7Z3B1">
    <property type="development level" value="Tbio"/>
</dbReference>
<dbReference type="PRO" id="PR:Q7Z3B1"/>
<dbReference type="Proteomes" id="UP000005640">
    <property type="component" value="Chromosome 1"/>
</dbReference>
<dbReference type="RNAct" id="Q7Z3B1">
    <property type="molecule type" value="protein"/>
</dbReference>
<dbReference type="Bgee" id="ENSG00000172260">
    <property type="expression patterns" value="Expressed in Brodmann (1909) area 46 and 176 other cell types or tissues"/>
</dbReference>
<dbReference type="GO" id="GO:0030425">
    <property type="term" value="C:dendrite"/>
    <property type="evidence" value="ECO:0007669"/>
    <property type="project" value="Ensembl"/>
</dbReference>
<dbReference type="GO" id="GO:0005576">
    <property type="term" value="C:extracellular region"/>
    <property type="evidence" value="ECO:0000304"/>
    <property type="project" value="Reactome"/>
</dbReference>
<dbReference type="GO" id="GO:0043025">
    <property type="term" value="C:neuronal cell body"/>
    <property type="evidence" value="ECO:0007669"/>
    <property type="project" value="Ensembl"/>
</dbReference>
<dbReference type="GO" id="GO:0005886">
    <property type="term" value="C:plasma membrane"/>
    <property type="evidence" value="ECO:0000304"/>
    <property type="project" value="Reactome"/>
</dbReference>
<dbReference type="GO" id="GO:0014069">
    <property type="term" value="C:postsynaptic density"/>
    <property type="evidence" value="ECO:0007669"/>
    <property type="project" value="Ensembl"/>
</dbReference>
<dbReference type="GO" id="GO:0098552">
    <property type="term" value="C:side of membrane"/>
    <property type="evidence" value="ECO:0007669"/>
    <property type="project" value="UniProtKB-KW"/>
</dbReference>
<dbReference type="GO" id="GO:0007420">
    <property type="term" value="P:brain development"/>
    <property type="evidence" value="ECO:0007669"/>
    <property type="project" value="Ensembl"/>
</dbReference>
<dbReference type="GO" id="GO:0098609">
    <property type="term" value="P:cell-cell adhesion"/>
    <property type="evidence" value="ECO:0007669"/>
    <property type="project" value="Ensembl"/>
</dbReference>
<dbReference type="GO" id="GO:0042632">
    <property type="term" value="P:cholesterol homeostasis"/>
    <property type="evidence" value="ECO:0007669"/>
    <property type="project" value="Ensembl"/>
</dbReference>
<dbReference type="GO" id="GO:0045444">
    <property type="term" value="P:fat cell differentiation"/>
    <property type="evidence" value="ECO:0007669"/>
    <property type="project" value="Ensembl"/>
</dbReference>
<dbReference type="GO" id="GO:0007631">
    <property type="term" value="P:feeding behavior"/>
    <property type="evidence" value="ECO:0007669"/>
    <property type="project" value="Ensembl"/>
</dbReference>
<dbReference type="GO" id="GO:0140042">
    <property type="term" value="P:lipid droplet formation"/>
    <property type="evidence" value="ECO:0007669"/>
    <property type="project" value="Ensembl"/>
</dbReference>
<dbReference type="GO" id="GO:0007626">
    <property type="term" value="P:locomotory behavior"/>
    <property type="evidence" value="ECO:0007669"/>
    <property type="project" value="Ensembl"/>
</dbReference>
<dbReference type="GO" id="GO:0048812">
    <property type="term" value="P:neuron projection morphogenesis"/>
    <property type="evidence" value="ECO:0007669"/>
    <property type="project" value="Ensembl"/>
</dbReference>
<dbReference type="GO" id="GO:0050850">
    <property type="term" value="P:positive regulation of calcium-mediated signaling"/>
    <property type="evidence" value="ECO:0007669"/>
    <property type="project" value="Ensembl"/>
</dbReference>
<dbReference type="GO" id="GO:0010976">
    <property type="term" value="P:positive regulation of neuron projection development"/>
    <property type="evidence" value="ECO:0007669"/>
    <property type="project" value="Ensembl"/>
</dbReference>
<dbReference type="GO" id="GO:0046878">
    <property type="term" value="P:positive regulation of saliva secretion"/>
    <property type="evidence" value="ECO:0007669"/>
    <property type="project" value="Ensembl"/>
</dbReference>
<dbReference type="GO" id="GO:0051963">
    <property type="term" value="P:regulation of synapse assembly"/>
    <property type="evidence" value="ECO:0007669"/>
    <property type="project" value="Ensembl"/>
</dbReference>
<dbReference type="GO" id="GO:0060538">
    <property type="term" value="P:skeletal muscle organ development"/>
    <property type="evidence" value="ECO:0007669"/>
    <property type="project" value="Ensembl"/>
</dbReference>
<dbReference type="GO" id="GO:0035176">
    <property type="term" value="P:social behavior"/>
    <property type="evidence" value="ECO:0007669"/>
    <property type="project" value="Ensembl"/>
</dbReference>
<dbReference type="FunFam" id="2.60.40.10:FF:000013">
    <property type="entry name" value="cell adhesion molecule 1 isoform X1"/>
    <property type="match status" value="1"/>
</dbReference>
<dbReference type="FunFam" id="2.60.40.10:FF:000500">
    <property type="entry name" value="limbic system-associated membrane protein isoform X1"/>
    <property type="match status" value="1"/>
</dbReference>
<dbReference type="FunFam" id="2.60.40.10:FF:000113">
    <property type="entry name" value="Opioid-binding protein/cell adhesion molecule"/>
    <property type="match status" value="1"/>
</dbReference>
<dbReference type="Gene3D" id="2.60.40.10">
    <property type="entry name" value="Immunoglobulins"/>
    <property type="match status" value="3"/>
</dbReference>
<dbReference type="InterPro" id="IPR007110">
    <property type="entry name" value="Ig-like_dom"/>
</dbReference>
<dbReference type="InterPro" id="IPR036179">
    <property type="entry name" value="Ig-like_dom_sf"/>
</dbReference>
<dbReference type="InterPro" id="IPR013783">
    <property type="entry name" value="Ig-like_fold"/>
</dbReference>
<dbReference type="InterPro" id="IPR013098">
    <property type="entry name" value="Ig_I-set"/>
</dbReference>
<dbReference type="InterPro" id="IPR003599">
    <property type="entry name" value="Ig_sub"/>
</dbReference>
<dbReference type="InterPro" id="IPR003598">
    <property type="entry name" value="Ig_sub2"/>
</dbReference>
<dbReference type="InterPro" id="IPR050876">
    <property type="entry name" value="IgLON_domain"/>
</dbReference>
<dbReference type="PANTHER" id="PTHR42757">
    <property type="entry name" value="IGLON FAMILY OF IMMUNOGLOBULIN SUPERFAMILY-RELATED"/>
    <property type="match status" value="1"/>
</dbReference>
<dbReference type="PANTHER" id="PTHR42757:SF6">
    <property type="entry name" value="NEURONAL GROWTH REGULATOR 1"/>
    <property type="match status" value="1"/>
</dbReference>
<dbReference type="Pfam" id="PF07679">
    <property type="entry name" value="I-set"/>
    <property type="match status" value="1"/>
</dbReference>
<dbReference type="Pfam" id="PF13927">
    <property type="entry name" value="Ig_3"/>
    <property type="match status" value="2"/>
</dbReference>
<dbReference type="SMART" id="SM00409">
    <property type="entry name" value="IG"/>
    <property type="match status" value="3"/>
</dbReference>
<dbReference type="SMART" id="SM00408">
    <property type="entry name" value="IGc2"/>
    <property type="match status" value="3"/>
</dbReference>
<dbReference type="SUPFAM" id="SSF48726">
    <property type="entry name" value="Immunoglobulin"/>
    <property type="match status" value="3"/>
</dbReference>
<dbReference type="PROSITE" id="PS50835">
    <property type="entry name" value="IG_LIKE"/>
    <property type="match status" value="3"/>
</dbReference>
<name>NEGR1_HUMAN</name>
<protein>
    <recommendedName>
        <fullName>Neuronal growth regulator 1</fullName>
    </recommendedName>
    <alternativeName>
        <fullName>IgLON family member 4</fullName>
    </alternativeName>
</protein>
<comment type="function">
    <text evidence="1">May be involved in cell-adhesion. May function as a trans-neural growth-promoting factor in regenerative axon sprouting in the mammalian brain (By similarity).</text>
</comment>
<comment type="interaction">
    <interactant intactId="EBI-4314838">
        <id>Q7Z3B1</id>
    </interactant>
    <interactant intactId="EBI-4314821">
        <id>Q13449</id>
        <label>LSAMP</label>
    </interactant>
    <organismsDiffer>false</organismsDiffer>
    <experiments>2</experiments>
</comment>
<comment type="interaction">
    <interactant intactId="EBI-4314838">
        <id>Q7Z3B1</id>
    </interactant>
    <interactant intactId="EBI-2368946">
        <id>P61916</id>
        <label>NPC2</label>
    </interactant>
    <organismsDiffer>false</organismsDiffer>
    <experiments>9</experiments>
</comment>
<comment type="interaction">
    <interactant intactId="EBI-4314838">
        <id>Q7Z3B1</id>
    </interactant>
    <interactant intactId="EBI-4315078">
        <id>Q9P121</id>
        <label>NTM</label>
    </interactant>
    <organismsDiffer>false</organismsDiffer>
    <experiments>2</experiments>
</comment>
<comment type="interaction">
    <interactant intactId="EBI-4314838">
        <id>Q7Z3B1</id>
    </interactant>
    <interactant intactId="EBI-2682386">
        <id>Q96PV0</id>
        <label>SYNGAP1</label>
    </interactant>
    <organismsDiffer>false</organismsDiffer>
    <experiments>4</experiments>
</comment>
<comment type="subcellular location">
    <subcellularLocation>
        <location evidence="1">Cell membrane</location>
        <topology evidence="1">Lipid-anchor</topology>
        <topology evidence="1">GPI-anchor</topology>
    </subcellularLocation>
</comment>
<comment type="alternative products">
    <event type="alternative splicing"/>
    <isoform>
        <id>Q7Z3B1-1</id>
        <name>1</name>
        <sequence type="displayed"/>
    </isoform>
    <isoform>
        <id>Q7Z3B1-2</id>
        <name>2</name>
        <sequence type="described" ref="VSP_056313"/>
    </isoform>
</comment>
<comment type="similarity">
    <text evidence="6">Belongs to the immunoglobulin superfamily. IgLON family.</text>
</comment>
<comment type="sequence caution" evidence="6">
    <conflict type="erroneous initiation">
        <sequence resource="EMBL-CDS" id="AAQ88499"/>
    </conflict>
</comment>